<sequence>MAIIPGVEQKPMSSNLESRIDQGTGREPADMVLKGGRFFDLVTGELVASDIAICGDTVVGTCGDYKGRHEIDISGKIVVPGFIDTHLHIESSLVTPHEFDRCVLPYGVTTAICDPHEIANVLGAEGLQFFLDSAMETIMDIRVQLSSCVPATHLETSGADLPIEKLLPFRNHPKVIGLAEFMNFPGVIHKDPVCMAKLEAFQGQHIDGHAPLLSGAALNGYLAAGIRTEHECTSAAEALEKIRKGMHILVREGSVSKDLHALMPIITERLSPYLALCTDDRNPLDIAEQGHLDYMIRTAIASGVEPLAIYRAASISAAKAFGLRDRGLVAPGWRADLVVIDTLQNCKASMVLSGGRLVDDALFATRKPVAPVGLDSVKARPVLASHFGVPVTEGETPVMGVLPGKIITEHRRYKLPTDGNQTTVDLENDIIKVAVIERHGKNGNHANGFVQGFGLKKGAIASTVGHDSHNICVVGVSEDDMALAANRLGDIKGGFVVVEDGRVTGEIALPVAGLMSLEPYETVRDTLHTLRKAAYALGTTLEEPFLQVAFLPLPVIPHLKISDMGMVDVDRFALI</sequence>
<name>ADEC1_AGRFC</name>
<reference key="1">
    <citation type="journal article" date="2001" name="Science">
        <title>The genome of the natural genetic engineer Agrobacterium tumefaciens C58.</title>
        <authorList>
            <person name="Wood D.W."/>
            <person name="Setubal J.C."/>
            <person name="Kaul R."/>
            <person name="Monks D.E."/>
            <person name="Kitajima J.P."/>
            <person name="Okura V.K."/>
            <person name="Zhou Y."/>
            <person name="Chen L."/>
            <person name="Wood G.E."/>
            <person name="Almeida N.F. Jr."/>
            <person name="Woo L."/>
            <person name="Chen Y."/>
            <person name="Paulsen I.T."/>
            <person name="Eisen J.A."/>
            <person name="Karp P.D."/>
            <person name="Bovee D. Sr."/>
            <person name="Chapman P."/>
            <person name="Clendenning J."/>
            <person name="Deatherage G."/>
            <person name="Gillet W."/>
            <person name="Grant C."/>
            <person name="Kutyavin T."/>
            <person name="Levy R."/>
            <person name="Li M.-J."/>
            <person name="McClelland E."/>
            <person name="Palmieri A."/>
            <person name="Raymond C."/>
            <person name="Rouse G."/>
            <person name="Saenphimmachak C."/>
            <person name="Wu Z."/>
            <person name="Romero P."/>
            <person name="Gordon D."/>
            <person name="Zhang S."/>
            <person name="Yoo H."/>
            <person name="Tao Y."/>
            <person name="Biddle P."/>
            <person name="Jung M."/>
            <person name="Krespan W."/>
            <person name="Perry M."/>
            <person name="Gordon-Kamm B."/>
            <person name="Liao L."/>
            <person name="Kim S."/>
            <person name="Hendrick C."/>
            <person name="Zhao Z.-Y."/>
            <person name="Dolan M."/>
            <person name="Chumley F."/>
            <person name="Tingey S.V."/>
            <person name="Tomb J.-F."/>
            <person name="Gordon M.P."/>
            <person name="Olson M.V."/>
            <person name="Nester E.W."/>
        </authorList>
    </citation>
    <scope>NUCLEOTIDE SEQUENCE [LARGE SCALE GENOMIC DNA]</scope>
    <source>
        <strain>C58 / ATCC 33970</strain>
    </source>
</reference>
<reference key="2">
    <citation type="journal article" date="2001" name="Science">
        <title>Genome sequence of the plant pathogen and biotechnology agent Agrobacterium tumefaciens C58.</title>
        <authorList>
            <person name="Goodner B."/>
            <person name="Hinkle G."/>
            <person name="Gattung S."/>
            <person name="Miller N."/>
            <person name="Blanchard M."/>
            <person name="Qurollo B."/>
            <person name="Goldman B.S."/>
            <person name="Cao Y."/>
            <person name="Askenazi M."/>
            <person name="Halling C."/>
            <person name="Mullin L."/>
            <person name="Houmiel K."/>
            <person name="Gordon J."/>
            <person name="Vaudin M."/>
            <person name="Iartchouk O."/>
            <person name="Epp A."/>
            <person name="Liu F."/>
            <person name="Wollam C."/>
            <person name="Allinger M."/>
            <person name="Doughty D."/>
            <person name="Scott C."/>
            <person name="Lappas C."/>
            <person name="Markelz B."/>
            <person name="Flanagan C."/>
            <person name="Crowell C."/>
            <person name="Gurson J."/>
            <person name="Lomo C."/>
            <person name="Sear C."/>
            <person name="Strub G."/>
            <person name="Cielo C."/>
            <person name="Slater S."/>
        </authorList>
    </citation>
    <scope>NUCLEOTIDE SEQUENCE [LARGE SCALE GENOMIC DNA]</scope>
    <source>
        <strain>C58 / ATCC 33970</strain>
    </source>
</reference>
<evidence type="ECO:0000255" key="1">
    <source>
        <dbReference type="HAMAP-Rule" id="MF_01518"/>
    </source>
</evidence>
<dbReference type="EC" id="3.5.4.2" evidence="1"/>
<dbReference type="EMBL" id="AE007869">
    <property type="protein sequence ID" value="AAK88034.1"/>
    <property type="molecule type" value="Genomic_DNA"/>
</dbReference>
<dbReference type="PIR" id="A97635">
    <property type="entry name" value="A97635"/>
</dbReference>
<dbReference type="PIR" id="AC2858">
    <property type="entry name" value="AC2858"/>
</dbReference>
<dbReference type="RefSeq" id="NP_355249.1">
    <property type="nucleotide sequence ID" value="NC_003062.2"/>
</dbReference>
<dbReference type="SMR" id="Q7CXF0"/>
<dbReference type="STRING" id="176299.Atu2292"/>
<dbReference type="EnsemblBacteria" id="AAK88034">
    <property type="protein sequence ID" value="AAK88034"/>
    <property type="gene ID" value="Atu2292"/>
</dbReference>
<dbReference type="KEGG" id="atu:Atu2292"/>
<dbReference type="PATRIC" id="fig|176299.10.peg.2304"/>
<dbReference type="eggNOG" id="COG1001">
    <property type="taxonomic scope" value="Bacteria"/>
</dbReference>
<dbReference type="HOGENOM" id="CLU_027935_0_0_5"/>
<dbReference type="OrthoDB" id="9775607at2"/>
<dbReference type="PhylomeDB" id="Q7CXF0"/>
<dbReference type="BioCyc" id="AGRO:ATU2292-MONOMER"/>
<dbReference type="Proteomes" id="UP000000813">
    <property type="component" value="Chromosome circular"/>
</dbReference>
<dbReference type="GO" id="GO:0000034">
    <property type="term" value="F:adenine deaminase activity"/>
    <property type="evidence" value="ECO:0007669"/>
    <property type="project" value="UniProtKB-UniRule"/>
</dbReference>
<dbReference type="GO" id="GO:0006146">
    <property type="term" value="P:adenine catabolic process"/>
    <property type="evidence" value="ECO:0007669"/>
    <property type="project" value="InterPro"/>
</dbReference>
<dbReference type="CDD" id="cd01295">
    <property type="entry name" value="AdeC"/>
    <property type="match status" value="1"/>
</dbReference>
<dbReference type="Gene3D" id="3.20.20.140">
    <property type="entry name" value="Metal-dependent hydrolases"/>
    <property type="match status" value="1"/>
</dbReference>
<dbReference type="Gene3D" id="2.30.40.10">
    <property type="entry name" value="Urease, subunit C, domain 1"/>
    <property type="match status" value="1"/>
</dbReference>
<dbReference type="HAMAP" id="MF_01518">
    <property type="entry name" value="Adenine_deamin"/>
    <property type="match status" value="1"/>
</dbReference>
<dbReference type="InterPro" id="IPR006679">
    <property type="entry name" value="Adenine_deam"/>
</dbReference>
<dbReference type="InterPro" id="IPR026912">
    <property type="entry name" value="Adenine_deam_C"/>
</dbReference>
<dbReference type="InterPro" id="IPR006680">
    <property type="entry name" value="Amidohydro-rel"/>
</dbReference>
<dbReference type="InterPro" id="IPR011059">
    <property type="entry name" value="Metal-dep_hydrolase_composite"/>
</dbReference>
<dbReference type="InterPro" id="IPR032466">
    <property type="entry name" value="Metal_Hydrolase"/>
</dbReference>
<dbReference type="NCBIfam" id="TIGR01178">
    <property type="entry name" value="ade"/>
    <property type="match status" value="1"/>
</dbReference>
<dbReference type="PANTHER" id="PTHR11113:SF2">
    <property type="entry name" value="ADENINE DEAMINASE"/>
    <property type="match status" value="1"/>
</dbReference>
<dbReference type="PANTHER" id="PTHR11113">
    <property type="entry name" value="N-ACETYLGLUCOSAMINE-6-PHOSPHATE DEACETYLASE"/>
    <property type="match status" value="1"/>
</dbReference>
<dbReference type="Pfam" id="PF13382">
    <property type="entry name" value="Adenine_deam_C"/>
    <property type="match status" value="1"/>
</dbReference>
<dbReference type="Pfam" id="PF01979">
    <property type="entry name" value="Amidohydro_1"/>
    <property type="match status" value="1"/>
</dbReference>
<dbReference type="SUPFAM" id="SSF51338">
    <property type="entry name" value="Composite domain of metallo-dependent hydrolases"/>
    <property type="match status" value="1"/>
</dbReference>
<dbReference type="SUPFAM" id="SSF51556">
    <property type="entry name" value="Metallo-dependent hydrolases"/>
    <property type="match status" value="1"/>
</dbReference>
<feature type="chain" id="PRO_0000142398" description="Adenine deaminase 1">
    <location>
        <begin position="1"/>
        <end position="575"/>
    </location>
</feature>
<gene>
    <name evidence="1" type="primary">ade1</name>
    <name type="synonym">adeC</name>
    <name type="ordered locus">Atu2292</name>
    <name type="ORF">AGR_C_4165</name>
</gene>
<protein>
    <recommendedName>
        <fullName evidence="1">Adenine deaminase 1</fullName>
        <shortName evidence="1">Adenase 1</shortName>
        <shortName evidence="1">Adenine aminase 1</shortName>
        <ecNumber evidence="1">3.5.4.2</ecNumber>
    </recommendedName>
</protein>
<proteinExistence type="inferred from homology"/>
<organism>
    <name type="scientific">Agrobacterium fabrum (strain C58 / ATCC 33970)</name>
    <name type="common">Agrobacterium tumefaciens (strain C58)</name>
    <dbReference type="NCBI Taxonomy" id="176299"/>
    <lineage>
        <taxon>Bacteria</taxon>
        <taxon>Pseudomonadati</taxon>
        <taxon>Pseudomonadota</taxon>
        <taxon>Alphaproteobacteria</taxon>
        <taxon>Hyphomicrobiales</taxon>
        <taxon>Rhizobiaceae</taxon>
        <taxon>Rhizobium/Agrobacterium group</taxon>
        <taxon>Agrobacterium</taxon>
        <taxon>Agrobacterium tumefaciens complex</taxon>
    </lineage>
</organism>
<comment type="catalytic activity">
    <reaction evidence="1">
        <text>adenine + H2O + H(+) = hypoxanthine + NH4(+)</text>
        <dbReference type="Rhea" id="RHEA:23688"/>
        <dbReference type="ChEBI" id="CHEBI:15377"/>
        <dbReference type="ChEBI" id="CHEBI:15378"/>
        <dbReference type="ChEBI" id="CHEBI:16708"/>
        <dbReference type="ChEBI" id="CHEBI:17368"/>
        <dbReference type="ChEBI" id="CHEBI:28938"/>
        <dbReference type="EC" id="3.5.4.2"/>
    </reaction>
</comment>
<comment type="cofactor">
    <cofactor evidence="1">
        <name>Mn(2+)</name>
        <dbReference type="ChEBI" id="CHEBI:29035"/>
    </cofactor>
</comment>
<comment type="similarity">
    <text evidence="1">Belongs to the metallo-dependent hydrolases superfamily. Adenine deaminase family.</text>
</comment>
<accession>Q7CXF0</accession>
<accession>Q8UD36</accession>
<keyword id="KW-0378">Hydrolase</keyword>
<keyword id="KW-0464">Manganese</keyword>
<keyword id="KW-1185">Reference proteome</keyword>